<dbReference type="EMBL" id="AB097932">
    <property type="status" value="NOT_ANNOTATED_CDS"/>
    <property type="molecule type" value="Genomic_DNA"/>
</dbReference>
<dbReference type="EMBL" id="AB097933">
    <property type="status" value="NOT_ANNOTATED_CDS"/>
    <property type="molecule type" value="Genomic_DNA"/>
</dbReference>
<dbReference type="EMBL" id="DQ008354">
    <property type="status" value="NOT_ANNOTATED_CDS"/>
    <property type="molecule type" value="Genomic_DNA"/>
</dbReference>
<dbReference type="EMBL" id="DQ008355">
    <property type="status" value="NOT_ANNOTATED_CDS"/>
    <property type="molecule type" value="Genomic_DNA"/>
</dbReference>
<dbReference type="IntAct" id="P0C764">
    <property type="interactions" value="21"/>
</dbReference>
<dbReference type="Proteomes" id="UP000002603">
    <property type="component" value="Genome"/>
</dbReference>
<dbReference type="Proteomes" id="UP000008504">
    <property type="component" value="Genome"/>
</dbReference>
<dbReference type="Proteomes" id="UP000008505">
    <property type="component" value="Genome"/>
</dbReference>
<dbReference type="Proteomes" id="UP000008506">
    <property type="component" value="Genome"/>
</dbReference>
<dbReference type="GO" id="GO:0044177">
    <property type="term" value="C:host cell Golgi apparatus"/>
    <property type="evidence" value="ECO:0007669"/>
    <property type="project" value="UniProtKB-SubCell"/>
</dbReference>
<dbReference type="GO" id="GO:0033644">
    <property type="term" value="C:host cell membrane"/>
    <property type="evidence" value="ECO:0007669"/>
    <property type="project" value="UniProtKB-SubCell"/>
</dbReference>
<dbReference type="GO" id="GO:0016020">
    <property type="term" value="C:membrane"/>
    <property type="evidence" value="ECO:0007669"/>
    <property type="project" value="UniProtKB-KW"/>
</dbReference>
<dbReference type="GO" id="GO:0019031">
    <property type="term" value="C:viral envelope"/>
    <property type="evidence" value="ECO:0007669"/>
    <property type="project" value="UniProtKB-KW"/>
</dbReference>
<dbReference type="GO" id="GO:0055036">
    <property type="term" value="C:virion membrane"/>
    <property type="evidence" value="ECO:0007669"/>
    <property type="project" value="UniProtKB-SubCell"/>
</dbReference>
<dbReference type="HAMAP" id="MF_04037">
    <property type="entry name" value="HSV_GN"/>
    <property type="match status" value="1"/>
</dbReference>
<dbReference type="InterPro" id="IPR008647">
    <property type="entry name" value="GN_domain"/>
</dbReference>
<dbReference type="InterPro" id="IPR034707">
    <property type="entry name" value="HSV_GN"/>
</dbReference>
<dbReference type="Pfam" id="PF05702">
    <property type="entry name" value="Herpes_UL49_5"/>
    <property type="match status" value="1"/>
</dbReference>
<sequence>MGSITASFILITMQILFFCEDSSGEPNFAERNFWHASCSARGVYIDGSMITTLFFYASLLGVCVALISLAYHACFRLFTRSVLRSTW</sequence>
<organism>
    <name type="scientific">Varicella-zoster virus (strain Oka vaccine)</name>
    <name type="common">HHV-3</name>
    <name type="synonym">Human herpesvirus 3</name>
    <dbReference type="NCBI Taxonomy" id="341980"/>
    <lineage>
        <taxon>Viruses</taxon>
        <taxon>Duplodnaviria</taxon>
        <taxon>Heunggongvirae</taxon>
        <taxon>Peploviricota</taxon>
        <taxon>Herviviricetes</taxon>
        <taxon>Herpesvirales</taxon>
        <taxon>Orthoherpesviridae</taxon>
        <taxon>Alphaherpesvirinae</taxon>
        <taxon>Varicellovirus</taxon>
        <taxon>Varicellovirus humanalpha3</taxon>
        <taxon>Human herpesvirus 3</taxon>
    </lineage>
</organism>
<evidence type="ECO:0000255" key="1">
    <source>
        <dbReference type="HAMAP-Rule" id="MF_04037"/>
    </source>
</evidence>
<evidence type="ECO:0000269" key="2">
    <source>
    </source>
</evidence>
<evidence type="ECO:0000305" key="3">
    <source>
    </source>
</evidence>
<keyword id="KW-1015">Disulfide bond</keyword>
<keyword id="KW-1040">Host Golgi apparatus</keyword>
<keyword id="KW-1043">Host membrane</keyword>
<keyword id="KW-0472">Membrane</keyword>
<keyword id="KW-0732">Signal</keyword>
<keyword id="KW-0812">Transmembrane</keyword>
<keyword id="KW-1133">Transmembrane helix</keyword>
<keyword id="KW-0261">Viral envelope protein</keyword>
<keyword id="KW-0946">Virion</keyword>
<organismHost>
    <name type="scientific">Homo sapiens</name>
    <name type="common">Human</name>
    <dbReference type="NCBI Taxonomy" id="9606"/>
</organismHost>
<accession>P0C764</accession>
<protein>
    <recommendedName>
        <fullName evidence="1">Envelope glycoprotein N</fullName>
    </recommendedName>
</protein>
<comment type="function">
    <text evidence="1 2">Envelope glycoprotein necessary for proper maturation of gM and modulation of its membrane fusion activity. Also plays a critical role in virion morphogenesis.</text>
</comment>
<comment type="subunit">
    <text evidence="1">Interacts (via N-terminus) with gM (via N-terminus). The gM-gN heterodimer forms the gCII complex.</text>
</comment>
<comment type="subcellular location">
    <subcellularLocation>
        <location evidence="1 3">Virion membrane</location>
        <topology evidence="1 3">Single-pass type I membrane protein</topology>
    </subcellularLocation>
    <subcellularLocation>
        <location evidence="1">Host membrane</location>
        <topology evidence="1 3">Single-pass type I membrane protein</topology>
    </subcellularLocation>
    <subcellularLocation>
        <location evidence="1">Host Golgi apparatus</location>
        <location evidence="1">Host trans-Golgi network</location>
    </subcellularLocation>
    <text evidence="1">When coexpressed with gM, localizes in the host trans-Golgi network.</text>
</comment>
<comment type="similarity">
    <text evidence="1">Belongs to the herpesviridae glycoprotein N family.</text>
</comment>
<proteinExistence type="evidence at protein level"/>
<reference key="1">
    <citation type="journal article" date="2002" name="J. Virol.">
        <title>Comparison of the complete DNA sequences of the Oka varicella vaccine and its parental virus.</title>
        <authorList>
            <person name="Gomi Y."/>
            <person name="Sunamachi H."/>
            <person name="Mori Y."/>
            <person name="Nagaike K."/>
            <person name="Takahashi M."/>
            <person name="Yamanishi K."/>
        </authorList>
    </citation>
    <scope>NUCLEOTIDE SEQUENCE [LARGE SCALE GENOMIC DNA]</scope>
    <source>
        <strain>Isolate Human/Japan/P-Oka/1970</strain>
        <strain>Oka varicella vaccine Biken (V-Oka-Biken)</strain>
    </source>
</reference>
<reference key="2">
    <citation type="journal article" date="2008" name="J. Virol.">
        <title>Complete DNA sequences of two oka strain varicella-zoster virus genomes.</title>
        <authorList>
            <person name="Tillieux S.L."/>
            <person name="Halsey W.S."/>
            <person name="Thomas E.S."/>
            <person name="Voycik J.J."/>
            <person name="Sathe G.M."/>
            <person name="Vassilev V."/>
        </authorList>
    </citation>
    <scope>NUCLEOTIDE SEQUENCE [LARGE SCALE GENOMIC DNA]</scope>
    <source>
        <strain>Oka varicella vaccine VarilRix (V-Oka-GSK)</strain>
        <strain>Oka varicella vaccine Varivax (V-Oka-Merck)</strain>
    </source>
</reference>
<reference key="3">
    <citation type="journal article" date="2010" name="J. Virol.">
        <title>Characterization of the varicella-zoster virus ORF50 gene, which encodes glycoprotein M.</title>
        <authorList>
            <person name="Sadaoka T."/>
            <person name="Yanagi T."/>
            <person name="Yamanishi K."/>
            <person name="Mori Y."/>
        </authorList>
    </citation>
    <scope>SUBCELLULAR LOCATION</scope>
    <scope>FUNCTION</scope>
    <scope>INTERACTION WITH GM</scope>
    <source>
        <strain>Isolate Human/Japan/P-Oka/1970</strain>
    </source>
</reference>
<feature type="signal peptide" evidence="1">
    <location>
        <begin position="1"/>
        <end position="24"/>
    </location>
</feature>
<feature type="chain" id="PRO_0000385513" description="Envelope glycoprotein N" evidence="1">
    <location>
        <begin position="25"/>
        <end position="87"/>
    </location>
</feature>
<feature type="topological domain" description="Virion surface" evidence="1">
    <location>
        <begin position="25"/>
        <end position="48"/>
    </location>
</feature>
<feature type="transmembrane region" description="Helical" evidence="1">
    <location>
        <begin position="49"/>
        <end position="69"/>
    </location>
</feature>
<feature type="topological domain" description="Intravirion" evidence="1">
    <location>
        <begin position="70"/>
        <end position="87"/>
    </location>
</feature>
<feature type="disulfide bond" description="Interchain (with gM)" evidence="1">
    <location>
        <position position="38"/>
    </location>
</feature>
<name>GN_VZVO</name>
<gene>
    <name evidence="1" type="primary">gN</name>
    <name type="ORF">9A</name>
</gene>